<feature type="chain" id="PRO_0000344416" description="Putative uncharacterized protein DDB_G0292636">
    <location>
        <begin position="1"/>
        <end position="160"/>
    </location>
</feature>
<feature type="region of interest" description="Disordered" evidence="2">
    <location>
        <begin position="1"/>
        <end position="160"/>
    </location>
</feature>
<feature type="coiled-coil region" evidence="1">
    <location>
        <begin position="20"/>
        <end position="111"/>
    </location>
</feature>
<feature type="compositionally biased region" description="Basic and acidic residues" evidence="2">
    <location>
        <begin position="1"/>
        <end position="31"/>
    </location>
</feature>
<feature type="compositionally biased region" description="Basic residues" evidence="2">
    <location>
        <begin position="32"/>
        <end position="42"/>
    </location>
</feature>
<feature type="compositionally biased region" description="Basic and acidic residues" evidence="2">
    <location>
        <begin position="43"/>
        <end position="160"/>
    </location>
</feature>
<organism>
    <name type="scientific">Dictyostelium discoideum</name>
    <name type="common">Social amoeba</name>
    <dbReference type="NCBI Taxonomy" id="44689"/>
    <lineage>
        <taxon>Eukaryota</taxon>
        <taxon>Amoebozoa</taxon>
        <taxon>Evosea</taxon>
        <taxon>Eumycetozoa</taxon>
        <taxon>Dictyostelia</taxon>
        <taxon>Dictyosteliales</taxon>
        <taxon>Dictyosteliaceae</taxon>
        <taxon>Dictyostelium</taxon>
    </lineage>
</organism>
<dbReference type="EMBL" id="AAFI02000194">
    <property type="protein sequence ID" value="EAL61121.1"/>
    <property type="molecule type" value="Genomic_DNA"/>
</dbReference>
<dbReference type="RefSeq" id="XP_629537.1">
    <property type="nucleotide sequence ID" value="XM_629535.1"/>
</dbReference>
<dbReference type="SMR" id="Q54CY3"/>
<dbReference type="PaxDb" id="44689-DDB0184489"/>
<dbReference type="EnsemblProtists" id="EAL61121">
    <property type="protein sequence ID" value="EAL61121"/>
    <property type="gene ID" value="DDB_G0292636"/>
</dbReference>
<dbReference type="GeneID" id="8628795"/>
<dbReference type="KEGG" id="ddi:DDB_G0292636"/>
<dbReference type="dictyBase" id="DDB_G0292636"/>
<dbReference type="HOGENOM" id="CLU_1655433_0_0_1"/>
<dbReference type="InParanoid" id="Q54CY3"/>
<dbReference type="OMA" id="QTCSNDI"/>
<dbReference type="PRO" id="PR:Q54CY3"/>
<dbReference type="Proteomes" id="UP000002195">
    <property type="component" value="Chromosome 6"/>
</dbReference>
<proteinExistence type="predicted"/>
<gene>
    <name type="ORF">DDB_G0292636</name>
</gene>
<sequence>METEKPNTDVKVAQDLEKLKLDEKHKDEKKDKKDKKDKKDKKDKKEKTPEEIEAKRLKKEAKNKDKTPEELEAKRLKKEAKNKDKTPEELEAKRLKKEAKEKSKLEGKKDKDHKDEGKKDKKDKDHKDKDHKDEGKKDKKDKEHKDEGKKDKKDKEHKKE</sequence>
<reference key="1">
    <citation type="journal article" date="2005" name="Nature">
        <title>The genome of the social amoeba Dictyostelium discoideum.</title>
        <authorList>
            <person name="Eichinger L."/>
            <person name="Pachebat J.A."/>
            <person name="Gloeckner G."/>
            <person name="Rajandream M.A."/>
            <person name="Sucgang R."/>
            <person name="Berriman M."/>
            <person name="Song J."/>
            <person name="Olsen R."/>
            <person name="Szafranski K."/>
            <person name="Xu Q."/>
            <person name="Tunggal B."/>
            <person name="Kummerfeld S."/>
            <person name="Madera M."/>
            <person name="Konfortov B.A."/>
            <person name="Rivero F."/>
            <person name="Bankier A.T."/>
            <person name="Lehmann R."/>
            <person name="Hamlin N."/>
            <person name="Davies R."/>
            <person name="Gaudet P."/>
            <person name="Fey P."/>
            <person name="Pilcher K."/>
            <person name="Chen G."/>
            <person name="Saunders D."/>
            <person name="Sodergren E.J."/>
            <person name="Davis P."/>
            <person name="Kerhornou A."/>
            <person name="Nie X."/>
            <person name="Hall N."/>
            <person name="Anjard C."/>
            <person name="Hemphill L."/>
            <person name="Bason N."/>
            <person name="Farbrother P."/>
            <person name="Desany B."/>
            <person name="Just E."/>
            <person name="Morio T."/>
            <person name="Rost R."/>
            <person name="Churcher C.M."/>
            <person name="Cooper J."/>
            <person name="Haydock S."/>
            <person name="van Driessche N."/>
            <person name="Cronin A."/>
            <person name="Goodhead I."/>
            <person name="Muzny D.M."/>
            <person name="Mourier T."/>
            <person name="Pain A."/>
            <person name="Lu M."/>
            <person name="Harper D."/>
            <person name="Lindsay R."/>
            <person name="Hauser H."/>
            <person name="James K.D."/>
            <person name="Quiles M."/>
            <person name="Madan Babu M."/>
            <person name="Saito T."/>
            <person name="Buchrieser C."/>
            <person name="Wardroper A."/>
            <person name="Felder M."/>
            <person name="Thangavelu M."/>
            <person name="Johnson D."/>
            <person name="Knights A."/>
            <person name="Loulseged H."/>
            <person name="Mungall K.L."/>
            <person name="Oliver K."/>
            <person name="Price C."/>
            <person name="Quail M.A."/>
            <person name="Urushihara H."/>
            <person name="Hernandez J."/>
            <person name="Rabbinowitsch E."/>
            <person name="Steffen D."/>
            <person name="Sanders M."/>
            <person name="Ma J."/>
            <person name="Kohara Y."/>
            <person name="Sharp S."/>
            <person name="Simmonds M.N."/>
            <person name="Spiegler S."/>
            <person name="Tivey A."/>
            <person name="Sugano S."/>
            <person name="White B."/>
            <person name="Walker D."/>
            <person name="Woodward J.R."/>
            <person name="Winckler T."/>
            <person name="Tanaka Y."/>
            <person name="Shaulsky G."/>
            <person name="Schleicher M."/>
            <person name="Weinstock G.M."/>
            <person name="Rosenthal A."/>
            <person name="Cox E.C."/>
            <person name="Chisholm R.L."/>
            <person name="Gibbs R.A."/>
            <person name="Loomis W.F."/>
            <person name="Platzer M."/>
            <person name="Kay R.R."/>
            <person name="Williams J.G."/>
            <person name="Dear P.H."/>
            <person name="Noegel A.A."/>
            <person name="Barrell B.G."/>
            <person name="Kuspa A."/>
        </authorList>
    </citation>
    <scope>NUCLEOTIDE SEQUENCE [LARGE SCALE GENOMIC DNA]</scope>
    <source>
        <strain>AX4</strain>
    </source>
</reference>
<evidence type="ECO:0000255" key="1"/>
<evidence type="ECO:0000256" key="2">
    <source>
        <dbReference type="SAM" id="MobiDB-lite"/>
    </source>
</evidence>
<name>Y4489_DICDI</name>
<accession>Q54CY3</accession>
<keyword id="KW-0175">Coiled coil</keyword>
<keyword id="KW-1185">Reference proteome</keyword>
<protein>
    <recommendedName>
        <fullName>Putative uncharacterized protein DDB_G0292636</fullName>
    </recommendedName>
</protein>